<dbReference type="EMBL" id="AE017355">
    <property type="protein sequence ID" value="AAT63878.1"/>
    <property type="molecule type" value="Genomic_DNA"/>
</dbReference>
<dbReference type="RefSeq" id="WP_000086558.1">
    <property type="nucleotide sequence ID" value="NC_005957.1"/>
</dbReference>
<dbReference type="RefSeq" id="YP_034477.1">
    <property type="nucleotide sequence ID" value="NC_005957.1"/>
</dbReference>
<dbReference type="SMR" id="Q6HPP3"/>
<dbReference type="GeneID" id="93010928"/>
<dbReference type="KEGG" id="btk:BT9727_0121"/>
<dbReference type="PATRIC" id="fig|281309.8.peg.122"/>
<dbReference type="HOGENOM" id="CLU_065464_1_2_9"/>
<dbReference type="Proteomes" id="UP000001301">
    <property type="component" value="Chromosome"/>
</dbReference>
<dbReference type="GO" id="GO:0022625">
    <property type="term" value="C:cytosolic large ribosomal subunit"/>
    <property type="evidence" value="ECO:0007669"/>
    <property type="project" value="TreeGrafter"/>
</dbReference>
<dbReference type="GO" id="GO:0019843">
    <property type="term" value="F:rRNA binding"/>
    <property type="evidence" value="ECO:0007669"/>
    <property type="project" value="UniProtKB-UniRule"/>
</dbReference>
<dbReference type="GO" id="GO:0003735">
    <property type="term" value="F:structural constituent of ribosome"/>
    <property type="evidence" value="ECO:0007669"/>
    <property type="project" value="InterPro"/>
</dbReference>
<dbReference type="GO" id="GO:0002181">
    <property type="term" value="P:cytoplasmic translation"/>
    <property type="evidence" value="ECO:0007669"/>
    <property type="project" value="TreeGrafter"/>
</dbReference>
<dbReference type="FunFam" id="3.90.930.12:FF:000001">
    <property type="entry name" value="50S ribosomal protein L6"/>
    <property type="match status" value="1"/>
</dbReference>
<dbReference type="FunFam" id="3.90.930.12:FF:000002">
    <property type="entry name" value="50S ribosomal protein L6"/>
    <property type="match status" value="1"/>
</dbReference>
<dbReference type="Gene3D" id="3.90.930.12">
    <property type="entry name" value="Ribosomal protein L6, alpha-beta domain"/>
    <property type="match status" value="2"/>
</dbReference>
<dbReference type="HAMAP" id="MF_01365_B">
    <property type="entry name" value="Ribosomal_uL6_B"/>
    <property type="match status" value="1"/>
</dbReference>
<dbReference type="InterPro" id="IPR000702">
    <property type="entry name" value="Ribosomal_uL6-like"/>
</dbReference>
<dbReference type="InterPro" id="IPR036789">
    <property type="entry name" value="Ribosomal_uL6-like_a/b-dom_sf"/>
</dbReference>
<dbReference type="InterPro" id="IPR020040">
    <property type="entry name" value="Ribosomal_uL6_a/b-dom"/>
</dbReference>
<dbReference type="InterPro" id="IPR019906">
    <property type="entry name" value="Ribosomal_uL6_bac-type"/>
</dbReference>
<dbReference type="InterPro" id="IPR002358">
    <property type="entry name" value="Ribosomal_uL6_CS"/>
</dbReference>
<dbReference type="NCBIfam" id="TIGR03654">
    <property type="entry name" value="L6_bact"/>
    <property type="match status" value="1"/>
</dbReference>
<dbReference type="PANTHER" id="PTHR11655">
    <property type="entry name" value="60S/50S RIBOSOMAL PROTEIN L6/L9"/>
    <property type="match status" value="1"/>
</dbReference>
<dbReference type="PANTHER" id="PTHR11655:SF14">
    <property type="entry name" value="LARGE RIBOSOMAL SUBUNIT PROTEIN UL6M"/>
    <property type="match status" value="1"/>
</dbReference>
<dbReference type="Pfam" id="PF00347">
    <property type="entry name" value="Ribosomal_L6"/>
    <property type="match status" value="2"/>
</dbReference>
<dbReference type="PIRSF" id="PIRSF002162">
    <property type="entry name" value="Ribosomal_L6"/>
    <property type="match status" value="1"/>
</dbReference>
<dbReference type="PRINTS" id="PR00059">
    <property type="entry name" value="RIBOSOMALL6"/>
</dbReference>
<dbReference type="SUPFAM" id="SSF56053">
    <property type="entry name" value="Ribosomal protein L6"/>
    <property type="match status" value="2"/>
</dbReference>
<dbReference type="PROSITE" id="PS00525">
    <property type="entry name" value="RIBOSOMAL_L6_1"/>
    <property type="match status" value="1"/>
</dbReference>
<feature type="chain" id="PRO_0000260844" description="Large ribosomal subunit protein uL6">
    <location>
        <begin position="1"/>
        <end position="179"/>
    </location>
</feature>
<comment type="function">
    <text evidence="1">This protein binds to the 23S rRNA, and is important in its secondary structure. It is located near the subunit interface in the base of the L7/L12 stalk, and near the tRNA binding site of the peptidyltransferase center.</text>
</comment>
<comment type="subunit">
    <text evidence="1">Part of the 50S ribosomal subunit.</text>
</comment>
<comment type="similarity">
    <text evidence="1">Belongs to the universal ribosomal protein uL6 family.</text>
</comment>
<keyword id="KW-0687">Ribonucleoprotein</keyword>
<keyword id="KW-0689">Ribosomal protein</keyword>
<keyword id="KW-0694">RNA-binding</keyword>
<keyword id="KW-0699">rRNA-binding</keyword>
<protein>
    <recommendedName>
        <fullName evidence="1">Large ribosomal subunit protein uL6</fullName>
    </recommendedName>
    <alternativeName>
        <fullName evidence="2">50S ribosomal protein L6</fullName>
    </alternativeName>
</protein>
<reference key="1">
    <citation type="journal article" date="2006" name="J. Bacteriol.">
        <title>Pathogenomic sequence analysis of Bacillus cereus and Bacillus thuringiensis isolates closely related to Bacillus anthracis.</title>
        <authorList>
            <person name="Han C.S."/>
            <person name="Xie G."/>
            <person name="Challacombe J.F."/>
            <person name="Altherr M.R."/>
            <person name="Bhotika S.S."/>
            <person name="Bruce D."/>
            <person name="Campbell C.S."/>
            <person name="Campbell M.L."/>
            <person name="Chen J."/>
            <person name="Chertkov O."/>
            <person name="Cleland C."/>
            <person name="Dimitrijevic M."/>
            <person name="Doggett N.A."/>
            <person name="Fawcett J.J."/>
            <person name="Glavina T."/>
            <person name="Goodwin L.A."/>
            <person name="Hill K.K."/>
            <person name="Hitchcock P."/>
            <person name="Jackson P.J."/>
            <person name="Keim P."/>
            <person name="Kewalramani A.R."/>
            <person name="Longmire J."/>
            <person name="Lucas S."/>
            <person name="Malfatti S."/>
            <person name="McMurry K."/>
            <person name="Meincke L.J."/>
            <person name="Misra M."/>
            <person name="Moseman B.L."/>
            <person name="Mundt M."/>
            <person name="Munk A.C."/>
            <person name="Okinaka R.T."/>
            <person name="Parson-Quintana B."/>
            <person name="Reilly L.P."/>
            <person name="Richardson P."/>
            <person name="Robinson D.L."/>
            <person name="Rubin E."/>
            <person name="Saunders E."/>
            <person name="Tapia R."/>
            <person name="Tesmer J.G."/>
            <person name="Thayer N."/>
            <person name="Thompson L.S."/>
            <person name="Tice H."/>
            <person name="Ticknor L.O."/>
            <person name="Wills P.L."/>
            <person name="Brettin T.S."/>
            <person name="Gilna P."/>
        </authorList>
    </citation>
    <scope>NUCLEOTIDE SEQUENCE [LARGE SCALE GENOMIC DNA]</scope>
    <source>
        <strain>97-27</strain>
    </source>
</reference>
<evidence type="ECO:0000255" key="1">
    <source>
        <dbReference type="HAMAP-Rule" id="MF_01365"/>
    </source>
</evidence>
<evidence type="ECO:0000305" key="2"/>
<gene>
    <name evidence="1" type="primary">rplF</name>
    <name type="ordered locus">BT9727_0121</name>
</gene>
<proteinExistence type="inferred from homology"/>
<name>RL6_BACHK</name>
<accession>Q6HPP3</accession>
<organism>
    <name type="scientific">Bacillus thuringiensis subsp. konkukian (strain 97-27)</name>
    <dbReference type="NCBI Taxonomy" id="281309"/>
    <lineage>
        <taxon>Bacteria</taxon>
        <taxon>Bacillati</taxon>
        <taxon>Bacillota</taxon>
        <taxon>Bacilli</taxon>
        <taxon>Bacillales</taxon>
        <taxon>Bacillaceae</taxon>
        <taxon>Bacillus</taxon>
        <taxon>Bacillus cereus group</taxon>
    </lineage>
</organism>
<sequence>MSRIGKKILEIPAGVTITVAEDNTVTVKGPKGELTRTFNADMLIKIEENTLTVERPSEQKEHRALHGTTRALIGNMVEGVTEGFARGLELVGVGYRAQKQGDKLVLSVGYSHPVEMTPEAGLEVEVPAPTKIVIKGIDKQRVGEFAANIRAVRAPEPYKGKGIRYEGEVVRRKEGKTAK</sequence>